<evidence type="ECO:0000255" key="1">
    <source>
        <dbReference type="HAMAP-Rule" id="MF_00859"/>
    </source>
</evidence>
<organism>
    <name type="scientific">Olisthodiscus luteus</name>
    <name type="common">Marine phytoflagellate</name>
    <dbReference type="NCBI Taxonomy" id="83000"/>
    <lineage>
        <taxon>Eukaryota</taxon>
        <taxon>Sar</taxon>
        <taxon>Stramenopiles</taxon>
        <taxon>Ochrophyta</taxon>
        <taxon>Olisthodiscophyceae</taxon>
        <taxon>Olisthodiscaceae</taxon>
        <taxon>Olisthodiscus</taxon>
    </lineage>
</organism>
<reference key="1">
    <citation type="journal article" date="1989" name="Proc. Natl. Acad. Sci. U.S.A.">
        <title>Gene for the ribulose-1,5-bisphosphate carboxylase small subunit protein of the marine chromophyte Olisthodiscus luteus is similar to that of a chemoautotrophic bacterium.</title>
        <authorList>
            <person name="Boczar B.A."/>
            <person name="Delaney T.P."/>
            <person name="Cattolico R.A."/>
        </authorList>
    </citation>
    <scope>NUCLEOTIDE SEQUENCE [GENOMIC DNA]</scope>
    <source>
        <strain>Carter</strain>
    </source>
</reference>
<proteinExistence type="inferred from homology"/>
<geneLocation type="chloroplast"/>
<accession>P14961</accession>
<comment type="function">
    <text evidence="1">RuBisCO catalyzes two reactions: the carboxylation of D-ribulose 1,5-bisphosphate, the primary event in carbon dioxide fixation, as well as the oxidative fragmentation of the pentose substrate in the photorespiration process. Both reactions occur simultaneously and in competition at the same active site. Although the small subunit is not catalytic it is essential for maximal activity.</text>
</comment>
<comment type="subunit">
    <text evidence="1">Heterohexadecamer of 8 large and 8 small subunits.</text>
</comment>
<comment type="subcellular location">
    <subcellularLocation>
        <location evidence="1">Plastid</location>
        <location evidence="1">Chloroplast</location>
    </subcellularLocation>
</comment>
<comment type="miscellaneous">
    <text>In this alga, in contrast to plants, the small subunit is encoded in the chloroplast.</text>
</comment>
<comment type="miscellaneous">
    <text evidence="1">The basic functional RuBisCO is composed of a large chain homodimer in a 'head-to-tail' conformation. In form I RuBisCO this homodimer is arranged in a barrel-like tetramer with the small subunits forming a tetrameric 'cap' on each end of the 'barrel'.</text>
</comment>
<comment type="similarity">
    <text evidence="1">Belongs to the RuBisCO small chain family.</text>
</comment>
<keyword id="KW-0113">Calvin cycle</keyword>
<keyword id="KW-0120">Carbon dioxide fixation</keyword>
<keyword id="KW-0150">Chloroplast</keyword>
<keyword id="KW-0601">Photorespiration</keyword>
<keyword id="KW-0602">Photosynthesis</keyword>
<keyword id="KW-0934">Plastid</keyword>
<name>RBS_OLILU</name>
<gene>
    <name evidence="1" type="primary">rbcS</name>
</gene>
<protein>
    <recommendedName>
        <fullName evidence="1">Ribulose bisphosphate carboxylase small subunit</fullName>
        <shortName evidence="1">RuBisCO small subunit</shortName>
    </recommendedName>
</protein>
<sequence>MRLTQGAFSYLPDLTDAQIIKQIDYCLSRGWSVGVEWTDDPHPRNAYWELWGLPLFDVKDSSAILYEVNECRRLNPEGYIKLVAFNAARGTESSASAFIVQRPKSEPGFYLERTEAEGRMIRYTIHSYAVARNPEGSRY</sequence>
<dbReference type="EMBL" id="M24288">
    <property type="protein sequence ID" value="AAA84532.1"/>
    <property type="molecule type" value="Genomic_DNA"/>
</dbReference>
<dbReference type="PIR" id="A32940">
    <property type="entry name" value="RKMLS"/>
</dbReference>
<dbReference type="SMR" id="P14961"/>
<dbReference type="GO" id="GO:0009507">
    <property type="term" value="C:chloroplast"/>
    <property type="evidence" value="ECO:0007669"/>
    <property type="project" value="UniProtKB-SubCell"/>
</dbReference>
<dbReference type="GO" id="GO:0016984">
    <property type="term" value="F:ribulose-bisphosphate carboxylase activity"/>
    <property type="evidence" value="ECO:0007669"/>
    <property type="project" value="UniProtKB-UniRule"/>
</dbReference>
<dbReference type="GO" id="GO:0019253">
    <property type="term" value="P:reductive pentose-phosphate cycle"/>
    <property type="evidence" value="ECO:0007669"/>
    <property type="project" value="UniProtKB-UniRule"/>
</dbReference>
<dbReference type="CDD" id="cd03527">
    <property type="entry name" value="RuBisCO_small"/>
    <property type="match status" value="1"/>
</dbReference>
<dbReference type="Gene3D" id="3.30.190.10">
    <property type="entry name" value="Ribulose bisphosphate carboxylase, small subunit"/>
    <property type="match status" value="1"/>
</dbReference>
<dbReference type="HAMAP" id="MF_00859">
    <property type="entry name" value="RuBisCO_S_bact"/>
    <property type="match status" value="1"/>
</dbReference>
<dbReference type="InterPro" id="IPR024681">
    <property type="entry name" value="RuBisCO_ssu"/>
</dbReference>
<dbReference type="InterPro" id="IPR000894">
    <property type="entry name" value="RuBisCO_ssu_dom"/>
</dbReference>
<dbReference type="InterPro" id="IPR036385">
    <property type="entry name" value="RuBisCO_ssu_sf"/>
</dbReference>
<dbReference type="PANTHER" id="PTHR31262">
    <property type="entry name" value="RIBULOSE BISPHOSPHATE CARBOXYLASE SMALL CHAIN 1, CHLOROPLASTIC"/>
    <property type="match status" value="1"/>
</dbReference>
<dbReference type="PANTHER" id="PTHR31262:SF23">
    <property type="entry name" value="RIBULOSE BISPHOSPHATE CARBOXYLASE SMALL SUBUNIT"/>
    <property type="match status" value="1"/>
</dbReference>
<dbReference type="Pfam" id="PF00101">
    <property type="entry name" value="RuBisCO_small"/>
    <property type="match status" value="1"/>
</dbReference>
<dbReference type="SMART" id="SM00961">
    <property type="entry name" value="RuBisCO_small"/>
    <property type="match status" value="1"/>
</dbReference>
<dbReference type="SUPFAM" id="SSF55239">
    <property type="entry name" value="RuBisCO, small subunit"/>
    <property type="match status" value="1"/>
</dbReference>
<feature type="chain" id="PRO_0000198601" description="Ribulose bisphosphate carboxylase small subunit">
    <location>
        <begin position="1"/>
        <end position="139"/>
    </location>
</feature>